<dbReference type="EC" id="6.3.5.-" evidence="1"/>
<dbReference type="EMBL" id="DS027056">
    <property type="protein sequence ID" value="EAW09719.1"/>
    <property type="molecule type" value="Genomic_DNA"/>
</dbReference>
<dbReference type="RefSeq" id="XP_001271145.1">
    <property type="nucleotide sequence ID" value="XM_001271144.1"/>
</dbReference>
<dbReference type="SMR" id="A1CKP5"/>
<dbReference type="STRING" id="344612.A1CKP5"/>
<dbReference type="EnsemblFungi" id="EAW09719">
    <property type="protein sequence ID" value="EAW09719"/>
    <property type="gene ID" value="ACLA_039340"/>
</dbReference>
<dbReference type="GeneID" id="4702723"/>
<dbReference type="KEGG" id="act:ACLA_039340"/>
<dbReference type="VEuPathDB" id="FungiDB:ACLA_039340"/>
<dbReference type="eggNOG" id="KOG2438">
    <property type="taxonomic scope" value="Eukaryota"/>
</dbReference>
<dbReference type="HOGENOM" id="CLU_019240_4_1_1"/>
<dbReference type="OMA" id="ARKWWMG"/>
<dbReference type="OrthoDB" id="1722066at2759"/>
<dbReference type="Proteomes" id="UP000006701">
    <property type="component" value="Unassembled WGS sequence"/>
</dbReference>
<dbReference type="GO" id="GO:0030956">
    <property type="term" value="C:glutamyl-tRNA(Gln) amidotransferase complex"/>
    <property type="evidence" value="ECO:0007669"/>
    <property type="project" value="UniProtKB-UniRule"/>
</dbReference>
<dbReference type="GO" id="GO:0005739">
    <property type="term" value="C:mitochondrion"/>
    <property type="evidence" value="ECO:0007669"/>
    <property type="project" value="UniProtKB-SubCell"/>
</dbReference>
<dbReference type="GO" id="GO:0005524">
    <property type="term" value="F:ATP binding"/>
    <property type="evidence" value="ECO:0007669"/>
    <property type="project" value="UniProtKB-KW"/>
</dbReference>
<dbReference type="GO" id="GO:0050567">
    <property type="term" value="F:glutaminyl-tRNA synthase (glutamine-hydrolyzing) activity"/>
    <property type="evidence" value="ECO:0007669"/>
    <property type="project" value="UniProtKB-UniRule"/>
</dbReference>
<dbReference type="GO" id="GO:0070681">
    <property type="term" value="P:glutaminyl-tRNAGln biosynthesis via transamidation"/>
    <property type="evidence" value="ECO:0007669"/>
    <property type="project" value="UniProtKB-UniRule"/>
</dbReference>
<dbReference type="GO" id="GO:0032543">
    <property type="term" value="P:mitochondrial translation"/>
    <property type="evidence" value="ECO:0007669"/>
    <property type="project" value="UniProtKB-UniRule"/>
</dbReference>
<dbReference type="Gene3D" id="1.10.10.410">
    <property type="match status" value="1"/>
</dbReference>
<dbReference type="HAMAP" id="MF_00121">
    <property type="entry name" value="GatB"/>
    <property type="match status" value="1"/>
</dbReference>
<dbReference type="InterPro" id="IPR017959">
    <property type="entry name" value="Asn/Gln-tRNA_amidoTrfase_suB/E"/>
</dbReference>
<dbReference type="InterPro" id="IPR006075">
    <property type="entry name" value="Asn/Gln-tRNA_Trfase_suB/E_cat"/>
</dbReference>
<dbReference type="InterPro" id="IPR018027">
    <property type="entry name" value="Asn/Gln_amidotransferase"/>
</dbReference>
<dbReference type="InterPro" id="IPR003789">
    <property type="entry name" value="Asn/Gln_tRNA_amidoTrase-B-like"/>
</dbReference>
<dbReference type="InterPro" id="IPR004413">
    <property type="entry name" value="GatB"/>
</dbReference>
<dbReference type="InterPro" id="IPR023168">
    <property type="entry name" value="GatB_Yqey_C_2"/>
</dbReference>
<dbReference type="InterPro" id="IPR017958">
    <property type="entry name" value="Gln-tRNA_amidoTrfase_suB_CS"/>
</dbReference>
<dbReference type="InterPro" id="IPR014746">
    <property type="entry name" value="Gln_synth/guanido_kin_cat_dom"/>
</dbReference>
<dbReference type="NCBIfam" id="TIGR00133">
    <property type="entry name" value="gatB"/>
    <property type="match status" value="1"/>
</dbReference>
<dbReference type="NCBIfam" id="NF004012">
    <property type="entry name" value="PRK05477.1-2"/>
    <property type="match status" value="1"/>
</dbReference>
<dbReference type="PANTHER" id="PTHR11659">
    <property type="entry name" value="GLUTAMYL-TRNA GLN AMIDOTRANSFERASE SUBUNIT B MITOCHONDRIAL AND PROKARYOTIC PET112-RELATED"/>
    <property type="match status" value="1"/>
</dbReference>
<dbReference type="PANTHER" id="PTHR11659:SF0">
    <property type="entry name" value="GLUTAMYL-TRNA(GLN) AMIDOTRANSFERASE SUBUNIT B, MITOCHONDRIAL"/>
    <property type="match status" value="1"/>
</dbReference>
<dbReference type="Pfam" id="PF02934">
    <property type="entry name" value="GatB_N"/>
    <property type="match status" value="1"/>
</dbReference>
<dbReference type="Pfam" id="PF02637">
    <property type="entry name" value="GatB_Yqey"/>
    <property type="match status" value="1"/>
</dbReference>
<dbReference type="SMART" id="SM00845">
    <property type="entry name" value="GatB_Yqey"/>
    <property type="match status" value="1"/>
</dbReference>
<dbReference type="SUPFAM" id="SSF89095">
    <property type="entry name" value="GatB/YqeY motif"/>
    <property type="match status" value="1"/>
</dbReference>
<dbReference type="SUPFAM" id="SSF55931">
    <property type="entry name" value="Glutamine synthetase/guanido kinase"/>
    <property type="match status" value="1"/>
</dbReference>
<dbReference type="PROSITE" id="PS01234">
    <property type="entry name" value="GATB"/>
    <property type="match status" value="1"/>
</dbReference>
<feature type="transit peptide" description="Mitochondrion" evidence="1">
    <location>
        <begin position="1"/>
        <end position="52"/>
    </location>
</feature>
<feature type="chain" id="PRO_0000413243" description="Glutamyl-tRNA(Gln) amidotransferase subunit B, mitochondrial">
    <location>
        <begin position="53"/>
        <end position="602"/>
    </location>
</feature>
<feature type="region of interest" description="Disordered" evidence="2">
    <location>
        <begin position="61"/>
        <end position="83"/>
    </location>
</feature>
<proteinExistence type="inferred from homology"/>
<name>GATB_ASPCL</name>
<organism>
    <name type="scientific">Aspergillus clavatus (strain ATCC 1007 / CBS 513.65 / DSM 816 / NCTC 3887 / NRRL 1 / QM 1276 / 107)</name>
    <dbReference type="NCBI Taxonomy" id="344612"/>
    <lineage>
        <taxon>Eukaryota</taxon>
        <taxon>Fungi</taxon>
        <taxon>Dikarya</taxon>
        <taxon>Ascomycota</taxon>
        <taxon>Pezizomycotina</taxon>
        <taxon>Eurotiomycetes</taxon>
        <taxon>Eurotiomycetidae</taxon>
        <taxon>Eurotiales</taxon>
        <taxon>Aspergillaceae</taxon>
        <taxon>Aspergillus</taxon>
        <taxon>Aspergillus subgen. Fumigati</taxon>
    </lineage>
</organism>
<reference key="1">
    <citation type="journal article" date="2008" name="PLoS Genet.">
        <title>Genomic islands in the pathogenic filamentous fungus Aspergillus fumigatus.</title>
        <authorList>
            <person name="Fedorova N.D."/>
            <person name="Khaldi N."/>
            <person name="Joardar V.S."/>
            <person name="Maiti R."/>
            <person name="Amedeo P."/>
            <person name="Anderson M.J."/>
            <person name="Crabtree J."/>
            <person name="Silva J.C."/>
            <person name="Badger J.H."/>
            <person name="Albarraq A."/>
            <person name="Angiuoli S."/>
            <person name="Bussey H."/>
            <person name="Bowyer P."/>
            <person name="Cotty P.J."/>
            <person name="Dyer P.S."/>
            <person name="Egan A."/>
            <person name="Galens K."/>
            <person name="Fraser-Liggett C.M."/>
            <person name="Haas B.J."/>
            <person name="Inman J.M."/>
            <person name="Kent R."/>
            <person name="Lemieux S."/>
            <person name="Malavazi I."/>
            <person name="Orvis J."/>
            <person name="Roemer T."/>
            <person name="Ronning C.M."/>
            <person name="Sundaram J.P."/>
            <person name="Sutton G."/>
            <person name="Turner G."/>
            <person name="Venter J.C."/>
            <person name="White O.R."/>
            <person name="Whitty B.R."/>
            <person name="Youngman P."/>
            <person name="Wolfe K.H."/>
            <person name="Goldman G.H."/>
            <person name="Wortman J.R."/>
            <person name="Jiang B."/>
            <person name="Denning D.W."/>
            <person name="Nierman W.C."/>
        </authorList>
    </citation>
    <scope>NUCLEOTIDE SEQUENCE [LARGE SCALE GENOMIC DNA]</scope>
    <source>
        <strain>ATCC 1007 / CBS 513.65 / DSM 816 / NCTC 3887 / NRRL 1 / QM 1276 / 107</strain>
    </source>
</reference>
<protein>
    <recommendedName>
        <fullName evidence="1">Glutamyl-tRNA(Gln) amidotransferase subunit B, mitochondrial</fullName>
        <shortName evidence="1">Glu-AdT subunit B</shortName>
        <ecNumber evidence="1">6.3.5.-</ecNumber>
    </recommendedName>
</protein>
<comment type="function">
    <text evidence="1">Allows the formation of correctly charged Gln-tRNA(Gln) through the transamidation of misacylated Glu-tRNA(Gln) in the mitochondria. The reaction takes place in the presence of glutamine and ATP through an activated gamma-phospho-Glu-tRNA(Gln).</text>
</comment>
<comment type="catalytic activity">
    <reaction evidence="1">
        <text>L-glutamyl-tRNA(Gln) + L-glutamine + ATP + H2O = L-glutaminyl-tRNA(Gln) + L-glutamate + ADP + phosphate + H(+)</text>
        <dbReference type="Rhea" id="RHEA:17521"/>
        <dbReference type="Rhea" id="RHEA-COMP:9681"/>
        <dbReference type="Rhea" id="RHEA-COMP:9684"/>
        <dbReference type="ChEBI" id="CHEBI:15377"/>
        <dbReference type="ChEBI" id="CHEBI:15378"/>
        <dbReference type="ChEBI" id="CHEBI:29985"/>
        <dbReference type="ChEBI" id="CHEBI:30616"/>
        <dbReference type="ChEBI" id="CHEBI:43474"/>
        <dbReference type="ChEBI" id="CHEBI:58359"/>
        <dbReference type="ChEBI" id="CHEBI:78520"/>
        <dbReference type="ChEBI" id="CHEBI:78521"/>
        <dbReference type="ChEBI" id="CHEBI:456216"/>
    </reaction>
</comment>
<comment type="subunit">
    <text evidence="1">Subunit of the heterotrimeric GatCAB amidotransferase (AdT) complex, composed of A, B and C subunits.</text>
</comment>
<comment type="subcellular location">
    <subcellularLocation>
        <location evidence="1">Mitochondrion</location>
    </subcellularLocation>
</comment>
<comment type="similarity">
    <text evidence="1">Belongs to the GatB/GatE family. GatB subfamily.</text>
</comment>
<sequence length="602" mass="67226">MLQQWLRQSPAAAGLLRCSRYRGPQAALLQLSPQRAPTYHAIRSLQTSAAESQERIPLRKQLKQGAKGLKAQKRQRRESEEASRQTWELTVGIEIHAQLNTETKLFSRASTSSTDTPNSNVALFDLAFPGSQPEFQAATLLPALRAAIALNCDIQPISRFDRKHYFYQDQPAGYQITQYYEPFARNGYIDLFKHDGIAPEDGDHVRIGIKQVQLEQDTAKSQEYPPSTQLLDFNRVSHPLIEIITMPQIHTPATAAACVRKIQSVLQSCSAVTTGMELGGLRADVNVSIRRRDEAPGTHQYGGIGGLGQRTEIKNLSSFKAVEDAIIAEKNRQIAVLESGGVIEGETRGWTIGSTETRKLRGKEGEVDYRYMPDPDLPPLYIGEDLVSGLRQALPTPPDELIELLAGSDYGLPIEDAKPLIELDDGARLEYYQDVVEILRSLQQDQDAKSRTILARVAGNWVLHEFGGLWTKADLAWDAHRVPPQTLAQIIDQLQRKRITGATAKQVLVMIFDGDRRSLPQLLEEENLLLRPLSREEYIALAETAMSQNPQMVEQIRSKNQLGKLGWFVGQMMRMGEKGRVEAQKADEILRELILGQSGSQP</sequence>
<keyword id="KW-0067">ATP-binding</keyword>
<keyword id="KW-0436">Ligase</keyword>
<keyword id="KW-0496">Mitochondrion</keyword>
<keyword id="KW-0547">Nucleotide-binding</keyword>
<keyword id="KW-0648">Protein biosynthesis</keyword>
<keyword id="KW-1185">Reference proteome</keyword>
<keyword id="KW-0809">Transit peptide</keyword>
<gene>
    <name type="ORF">ACLA_039340</name>
</gene>
<evidence type="ECO:0000255" key="1">
    <source>
        <dbReference type="HAMAP-Rule" id="MF_03147"/>
    </source>
</evidence>
<evidence type="ECO:0000256" key="2">
    <source>
        <dbReference type="SAM" id="MobiDB-lite"/>
    </source>
</evidence>
<accession>A1CKP5</accession>